<comment type="function">
    <text evidence="1">Catalyzes the reversible interconversion of serine and glycine with tetrahydrofolate (THF) serving as the one-carbon carrier. This reaction serves as the major source of one-carbon groups required for the biosynthesis of purines, thymidylate, methionine, and other important biomolecules. Also exhibits THF-independent aldolase activity toward beta-hydroxyamino acids, producing glycine and aldehydes, via a retro-aldol mechanism.</text>
</comment>
<comment type="catalytic activity">
    <reaction evidence="1">
        <text>(6R)-5,10-methylene-5,6,7,8-tetrahydrofolate + glycine + H2O = (6S)-5,6,7,8-tetrahydrofolate + L-serine</text>
        <dbReference type="Rhea" id="RHEA:15481"/>
        <dbReference type="ChEBI" id="CHEBI:15377"/>
        <dbReference type="ChEBI" id="CHEBI:15636"/>
        <dbReference type="ChEBI" id="CHEBI:33384"/>
        <dbReference type="ChEBI" id="CHEBI:57305"/>
        <dbReference type="ChEBI" id="CHEBI:57453"/>
        <dbReference type="EC" id="2.1.2.1"/>
    </reaction>
</comment>
<comment type="cofactor">
    <cofactor evidence="1">
        <name>pyridoxal 5'-phosphate</name>
        <dbReference type="ChEBI" id="CHEBI:597326"/>
    </cofactor>
</comment>
<comment type="pathway">
    <text evidence="1">One-carbon metabolism; tetrahydrofolate interconversion.</text>
</comment>
<comment type="pathway">
    <text evidence="1">Amino-acid biosynthesis; glycine biosynthesis; glycine from L-serine: step 1/1.</text>
</comment>
<comment type="subunit">
    <text evidence="1">Homodimer.</text>
</comment>
<comment type="subcellular location">
    <subcellularLocation>
        <location evidence="1">Cytoplasm</location>
    </subcellularLocation>
</comment>
<comment type="similarity">
    <text evidence="1">Belongs to the SHMT family.</text>
</comment>
<sequence>MKMKSLREVDAEIYSLILQEKKRETNKILMIASENYASRAVMEAQGSLFTNKYAEGYPGRRYYGGCEYADEVERLAQERAKQLFNVEHVNVQPHSGTQANMAVYFAMLQPGDTIMGMSLTHGGHLSHGSPVNFTGKLYKTVFYGVNKETGYIDMDEVRRLAQEHKPKIIITGASAYPRTIDFKAFSEIAKEVGAYLMADIAHIAGLIATSMHPSPVPYSDFITTTTHKTLRGPRGGVVMCKAQYAKAIDKTVFPGIQGGPLVHVIAAKAVAFKEALSEDFKEYQKKVIKNAKTLAEALKKKGFKLVSDGTDNHLMLVDLTNFNITGKEAEEALDKAGITVNKNTIPFDTKPPTVTSGIRIGTPSVTTRGMGEEEMEKIAEIIERVIKNISNDSVIKDMQKKVQELCKKFPIY</sequence>
<name>GLYA_THEYD</name>
<feature type="chain" id="PRO_0000369960" description="Serine hydroxymethyltransferase">
    <location>
        <begin position="1"/>
        <end position="412"/>
    </location>
</feature>
<feature type="binding site" evidence="1">
    <location>
        <position position="119"/>
    </location>
    <ligand>
        <name>(6S)-5,6,7,8-tetrahydrofolate</name>
        <dbReference type="ChEBI" id="CHEBI:57453"/>
    </ligand>
</feature>
<feature type="binding site" evidence="1">
    <location>
        <begin position="123"/>
        <end position="125"/>
    </location>
    <ligand>
        <name>(6S)-5,6,7,8-tetrahydrofolate</name>
        <dbReference type="ChEBI" id="CHEBI:57453"/>
    </ligand>
</feature>
<feature type="site" description="Plays an important role in substrate specificity" evidence="1">
    <location>
        <position position="227"/>
    </location>
</feature>
<feature type="modified residue" description="N6-(pyridoxal phosphate)lysine" evidence="1">
    <location>
        <position position="228"/>
    </location>
</feature>
<evidence type="ECO:0000255" key="1">
    <source>
        <dbReference type="HAMAP-Rule" id="MF_00051"/>
    </source>
</evidence>
<gene>
    <name evidence="1" type="primary">glyA</name>
    <name type="ordered locus">THEYE_A1387</name>
</gene>
<reference key="1">
    <citation type="submission" date="2008-08" db="EMBL/GenBank/DDBJ databases">
        <title>The complete genome sequence of Thermodesulfovibrio yellowstonii strain ATCC 51303 / DSM 11347 / YP87.</title>
        <authorList>
            <person name="Dodson R.J."/>
            <person name="Durkin A.S."/>
            <person name="Wu M."/>
            <person name="Eisen J."/>
            <person name="Sutton G."/>
        </authorList>
    </citation>
    <scope>NUCLEOTIDE SEQUENCE [LARGE SCALE GENOMIC DNA]</scope>
    <source>
        <strain>ATCC 51303 / DSM 11347 / YP87</strain>
    </source>
</reference>
<accession>B5YFZ0</accession>
<organism>
    <name type="scientific">Thermodesulfovibrio yellowstonii (strain ATCC 51303 / DSM 11347 / YP87)</name>
    <dbReference type="NCBI Taxonomy" id="289376"/>
    <lineage>
        <taxon>Bacteria</taxon>
        <taxon>Pseudomonadati</taxon>
        <taxon>Nitrospirota</taxon>
        <taxon>Thermodesulfovibrionia</taxon>
        <taxon>Thermodesulfovibrionales</taxon>
        <taxon>Thermodesulfovibrionaceae</taxon>
        <taxon>Thermodesulfovibrio</taxon>
    </lineage>
</organism>
<protein>
    <recommendedName>
        <fullName evidence="1">Serine hydroxymethyltransferase</fullName>
        <shortName evidence="1">SHMT</shortName>
        <shortName evidence="1">Serine methylase</shortName>
        <ecNumber evidence="1">2.1.2.1</ecNumber>
    </recommendedName>
</protein>
<keyword id="KW-0028">Amino-acid biosynthesis</keyword>
<keyword id="KW-0963">Cytoplasm</keyword>
<keyword id="KW-0554">One-carbon metabolism</keyword>
<keyword id="KW-0663">Pyridoxal phosphate</keyword>
<keyword id="KW-1185">Reference proteome</keyword>
<keyword id="KW-0808">Transferase</keyword>
<proteinExistence type="inferred from homology"/>
<dbReference type="EC" id="2.1.2.1" evidence="1"/>
<dbReference type="EMBL" id="CP001147">
    <property type="protein sequence ID" value="ACI21819.1"/>
    <property type="molecule type" value="Genomic_DNA"/>
</dbReference>
<dbReference type="RefSeq" id="WP_012546524.1">
    <property type="nucleotide sequence ID" value="NC_011296.1"/>
</dbReference>
<dbReference type="RefSeq" id="YP_002249188.1">
    <property type="nucleotide sequence ID" value="NC_011296.1"/>
</dbReference>
<dbReference type="SMR" id="B5YFZ0"/>
<dbReference type="FunCoup" id="B5YFZ0">
    <property type="interactions" value="446"/>
</dbReference>
<dbReference type="STRING" id="289376.THEYE_A1387"/>
<dbReference type="EnsemblBacteria" id="ACI21819">
    <property type="protein sequence ID" value="ACI21819"/>
    <property type="gene ID" value="THEYE_A1387"/>
</dbReference>
<dbReference type="KEGG" id="tye:THEYE_A1387"/>
<dbReference type="PATRIC" id="fig|289376.4.peg.1349"/>
<dbReference type="eggNOG" id="COG0112">
    <property type="taxonomic scope" value="Bacteria"/>
</dbReference>
<dbReference type="HOGENOM" id="CLU_022477_2_1_0"/>
<dbReference type="InParanoid" id="B5YFZ0"/>
<dbReference type="OrthoDB" id="9803846at2"/>
<dbReference type="UniPathway" id="UPA00193"/>
<dbReference type="UniPathway" id="UPA00288">
    <property type="reaction ID" value="UER01023"/>
</dbReference>
<dbReference type="Proteomes" id="UP000000718">
    <property type="component" value="Chromosome"/>
</dbReference>
<dbReference type="GO" id="GO:0005737">
    <property type="term" value="C:cytoplasm"/>
    <property type="evidence" value="ECO:0000318"/>
    <property type="project" value="GO_Central"/>
</dbReference>
<dbReference type="GO" id="GO:0005829">
    <property type="term" value="C:cytosol"/>
    <property type="evidence" value="ECO:0000318"/>
    <property type="project" value="GO_Central"/>
</dbReference>
<dbReference type="GO" id="GO:0004372">
    <property type="term" value="F:glycine hydroxymethyltransferase activity"/>
    <property type="evidence" value="ECO:0000318"/>
    <property type="project" value="GO_Central"/>
</dbReference>
<dbReference type="GO" id="GO:0030170">
    <property type="term" value="F:pyridoxal phosphate binding"/>
    <property type="evidence" value="ECO:0000318"/>
    <property type="project" value="GO_Central"/>
</dbReference>
<dbReference type="GO" id="GO:0019264">
    <property type="term" value="P:glycine biosynthetic process from serine"/>
    <property type="evidence" value="ECO:0000318"/>
    <property type="project" value="GO_Central"/>
</dbReference>
<dbReference type="GO" id="GO:0035999">
    <property type="term" value="P:tetrahydrofolate interconversion"/>
    <property type="evidence" value="ECO:0007669"/>
    <property type="project" value="UniProtKB-UniRule"/>
</dbReference>
<dbReference type="GO" id="GO:0046653">
    <property type="term" value="P:tetrahydrofolate metabolic process"/>
    <property type="evidence" value="ECO:0000318"/>
    <property type="project" value="GO_Central"/>
</dbReference>
<dbReference type="CDD" id="cd00378">
    <property type="entry name" value="SHMT"/>
    <property type="match status" value="1"/>
</dbReference>
<dbReference type="FunFam" id="3.40.640.10:FF:000001">
    <property type="entry name" value="Serine hydroxymethyltransferase"/>
    <property type="match status" value="1"/>
</dbReference>
<dbReference type="FunFam" id="3.90.1150.10:FF:000003">
    <property type="entry name" value="Serine hydroxymethyltransferase"/>
    <property type="match status" value="1"/>
</dbReference>
<dbReference type="Gene3D" id="3.90.1150.10">
    <property type="entry name" value="Aspartate Aminotransferase, domain 1"/>
    <property type="match status" value="1"/>
</dbReference>
<dbReference type="Gene3D" id="3.40.640.10">
    <property type="entry name" value="Type I PLP-dependent aspartate aminotransferase-like (Major domain)"/>
    <property type="match status" value="1"/>
</dbReference>
<dbReference type="HAMAP" id="MF_00051">
    <property type="entry name" value="SHMT"/>
    <property type="match status" value="1"/>
</dbReference>
<dbReference type="InterPro" id="IPR015424">
    <property type="entry name" value="PyrdxlP-dep_Trfase"/>
</dbReference>
<dbReference type="InterPro" id="IPR015421">
    <property type="entry name" value="PyrdxlP-dep_Trfase_major"/>
</dbReference>
<dbReference type="InterPro" id="IPR015422">
    <property type="entry name" value="PyrdxlP-dep_Trfase_small"/>
</dbReference>
<dbReference type="InterPro" id="IPR001085">
    <property type="entry name" value="Ser_HO-MeTrfase"/>
</dbReference>
<dbReference type="InterPro" id="IPR049943">
    <property type="entry name" value="Ser_HO-MeTrfase-like"/>
</dbReference>
<dbReference type="InterPro" id="IPR019798">
    <property type="entry name" value="Ser_HO-MeTrfase_PLP_BS"/>
</dbReference>
<dbReference type="InterPro" id="IPR039429">
    <property type="entry name" value="SHMT-like_dom"/>
</dbReference>
<dbReference type="NCBIfam" id="NF000586">
    <property type="entry name" value="PRK00011.1"/>
    <property type="match status" value="1"/>
</dbReference>
<dbReference type="PANTHER" id="PTHR11680">
    <property type="entry name" value="SERINE HYDROXYMETHYLTRANSFERASE"/>
    <property type="match status" value="1"/>
</dbReference>
<dbReference type="PANTHER" id="PTHR11680:SF35">
    <property type="entry name" value="SERINE HYDROXYMETHYLTRANSFERASE 1"/>
    <property type="match status" value="1"/>
</dbReference>
<dbReference type="Pfam" id="PF00464">
    <property type="entry name" value="SHMT"/>
    <property type="match status" value="1"/>
</dbReference>
<dbReference type="PIRSF" id="PIRSF000412">
    <property type="entry name" value="SHMT"/>
    <property type="match status" value="1"/>
</dbReference>
<dbReference type="SUPFAM" id="SSF53383">
    <property type="entry name" value="PLP-dependent transferases"/>
    <property type="match status" value="1"/>
</dbReference>
<dbReference type="PROSITE" id="PS00096">
    <property type="entry name" value="SHMT"/>
    <property type="match status" value="1"/>
</dbReference>